<comment type="function">
    <text evidence="1">Associates with the EF-Tu.GDP complex and induces the exchange of GDP to GTP. It remains bound to the aminoacyl-tRNA.EF-Tu.GTP complex up to the GTP hydrolysis stage on the ribosome.</text>
</comment>
<comment type="subcellular location">
    <subcellularLocation>
        <location evidence="1">Cytoplasm</location>
    </subcellularLocation>
</comment>
<comment type="similarity">
    <text evidence="1">Belongs to the EF-Ts family.</text>
</comment>
<dbReference type="EMBL" id="CP000949">
    <property type="protein sequence ID" value="ACA74561.1"/>
    <property type="molecule type" value="Genomic_DNA"/>
</dbReference>
<dbReference type="SMR" id="B1JBQ9"/>
<dbReference type="STRING" id="390235.PputW619_4081"/>
<dbReference type="KEGG" id="ppw:PputW619_4081"/>
<dbReference type="eggNOG" id="COG0264">
    <property type="taxonomic scope" value="Bacteria"/>
</dbReference>
<dbReference type="HOGENOM" id="CLU_047155_0_2_6"/>
<dbReference type="OrthoDB" id="9808348at2"/>
<dbReference type="GO" id="GO:0005737">
    <property type="term" value="C:cytoplasm"/>
    <property type="evidence" value="ECO:0007669"/>
    <property type="project" value="UniProtKB-SubCell"/>
</dbReference>
<dbReference type="GO" id="GO:0003746">
    <property type="term" value="F:translation elongation factor activity"/>
    <property type="evidence" value="ECO:0007669"/>
    <property type="project" value="UniProtKB-UniRule"/>
</dbReference>
<dbReference type="CDD" id="cd14275">
    <property type="entry name" value="UBA_EF-Ts"/>
    <property type="match status" value="1"/>
</dbReference>
<dbReference type="FunFam" id="1.10.286.20:FF:000001">
    <property type="entry name" value="Elongation factor Ts"/>
    <property type="match status" value="1"/>
</dbReference>
<dbReference type="FunFam" id="1.10.8.10:FF:000001">
    <property type="entry name" value="Elongation factor Ts"/>
    <property type="match status" value="1"/>
</dbReference>
<dbReference type="Gene3D" id="1.10.286.20">
    <property type="match status" value="1"/>
</dbReference>
<dbReference type="Gene3D" id="1.10.8.10">
    <property type="entry name" value="DNA helicase RuvA subunit, C-terminal domain"/>
    <property type="match status" value="1"/>
</dbReference>
<dbReference type="Gene3D" id="3.30.479.20">
    <property type="entry name" value="Elongation factor Ts, dimerisation domain"/>
    <property type="match status" value="2"/>
</dbReference>
<dbReference type="HAMAP" id="MF_00050">
    <property type="entry name" value="EF_Ts"/>
    <property type="match status" value="1"/>
</dbReference>
<dbReference type="InterPro" id="IPR036402">
    <property type="entry name" value="EF-Ts_dimer_sf"/>
</dbReference>
<dbReference type="InterPro" id="IPR001816">
    <property type="entry name" value="Transl_elong_EFTs/EF1B"/>
</dbReference>
<dbReference type="InterPro" id="IPR014039">
    <property type="entry name" value="Transl_elong_EFTs/EF1B_dimer"/>
</dbReference>
<dbReference type="InterPro" id="IPR018101">
    <property type="entry name" value="Transl_elong_Ts_CS"/>
</dbReference>
<dbReference type="InterPro" id="IPR009060">
    <property type="entry name" value="UBA-like_sf"/>
</dbReference>
<dbReference type="NCBIfam" id="TIGR00116">
    <property type="entry name" value="tsf"/>
    <property type="match status" value="1"/>
</dbReference>
<dbReference type="PANTHER" id="PTHR11741">
    <property type="entry name" value="ELONGATION FACTOR TS"/>
    <property type="match status" value="1"/>
</dbReference>
<dbReference type="PANTHER" id="PTHR11741:SF0">
    <property type="entry name" value="ELONGATION FACTOR TS, MITOCHONDRIAL"/>
    <property type="match status" value="1"/>
</dbReference>
<dbReference type="Pfam" id="PF00889">
    <property type="entry name" value="EF_TS"/>
    <property type="match status" value="1"/>
</dbReference>
<dbReference type="SUPFAM" id="SSF54713">
    <property type="entry name" value="Elongation factor Ts (EF-Ts), dimerisation domain"/>
    <property type="match status" value="2"/>
</dbReference>
<dbReference type="SUPFAM" id="SSF46934">
    <property type="entry name" value="UBA-like"/>
    <property type="match status" value="1"/>
</dbReference>
<dbReference type="PROSITE" id="PS01126">
    <property type="entry name" value="EF_TS_1"/>
    <property type="match status" value="1"/>
</dbReference>
<dbReference type="PROSITE" id="PS01127">
    <property type="entry name" value="EF_TS_2"/>
    <property type="match status" value="1"/>
</dbReference>
<feature type="chain" id="PRO_1000116775" description="Elongation factor Ts">
    <location>
        <begin position="1"/>
        <end position="287"/>
    </location>
</feature>
<feature type="region of interest" description="Involved in Mg(2+) ion dislocation from EF-Tu" evidence="1">
    <location>
        <begin position="80"/>
        <end position="83"/>
    </location>
</feature>
<sequence>MAAITAALVKELRERTGEGMMDCKKALEKAGGDIEKAIDDMRASGAIKAAKKAGNVAAEGAIAVKTDGKSAVLLEVNSQTDFLALQDDFKNFVAESLEEAFAQKLTDAAPLIASREAAREALVAKCGENVNIRRLVRVEGDVVGAYLHGNKIGAVVVLKGGDVELAKNIAMHVAASNPEFLDASEISAEAIEREKNVFLQLNADKIAGKPGNIVENMINGRITKFKAEASLKEQAFVMNPEVKVGELAKKAGAEIVSFTYFKVGEGIEKPVDDFAAEVAAQVAAAKQ</sequence>
<organism>
    <name type="scientific">Pseudomonas putida (strain W619)</name>
    <dbReference type="NCBI Taxonomy" id="390235"/>
    <lineage>
        <taxon>Bacteria</taxon>
        <taxon>Pseudomonadati</taxon>
        <taxon>Pseudomonadota</taxon>
        <taxon>Gammaproteobacteria</taxon>
        <taxon>Pseudomonadales</taxon>
        <taxon>Pseudomonadaceae</taxon>
        <taxon>Pseudomonas</taxon>
    </lineage>
</organism>
<name>EFTS_PSEPW</name>
<gene>
    <name evidence="1" type="primary">tsf</name>
    <name type="ordered locus">PputW619_4081</name>
</gene>
<proteinExistence type="inferred from homology"/>
<keyword id="KW-0963">Cytoplasm</keyword>
<keyword id="KW-0251">Elongation factor</keyword>
<keyword id="KW-0648">Protein biosynthesis</keyword>
<evidence type="ECO:0000255" key="1">
    <source>
        <dbReference type="HAMAP-Rule" id="MF_00050"/>
    </source>
</evidence>
<accession>B1JBQ9</accession>
<reference key="1">
    <citation type="submission" date="2008-02" db="EMBL/GenBank/DDBJ databases">
        <title>Complete sequence of Pseudomonas putida W619.</title>
        <authorList>
            <person name="Copeland A."/>
            <person name="Lucas S."/>
            <person name="Lapidus A."/>
            <person name="Barry K."/>
            <person name="Detter J.C."/>
            <person name="Glavina del Rio T."/>
            <person name="Dalin E."/>
            <person name="Tice H."/>
            <person name="Pitluck S."/>
            <person name="Chain P."/>
            <person name="Malfatti S."/>
            <person name="Shin M."/>
            <person name="Vergez L."/>
            <person name="Schmutz J."/>
            <person name="Larimer F."/>
            <person name="Land M."/>
            <person name="Hauser L."/>
            <person name="Kyrpides N."/>
            <person name="Kim E."/>
            <person name="Taghavi S."/>
            <person name="Vangronsveld D."/>
            <person name="van der Lelie D."/>
            <person name="Richardson P."/>
        </authorList>
    </citation>
    <scope>NUCLEOTIDE SEQUENCE [LARGE SCALE GENOMIC DNA]</scope>
    <source>
        <strain>W619</strain>
    </source>
</reference>
<protein>
    <recommendedName>
        <fullName evidence="1">Elongation factor Ts</fullName>
        <shortName evidence="1">EF-Ts</shortName>
    </recommendedName>
</protein>